<evidence type="ECO:0000250" key="1"/>
<evidence type="ECO:0000250" key="2">
    <source>
        <dbReference type="UniProtKB" id="Q43517"/>
    </source>
</evidence>
<evidence type="ECO:0000255" key="3">
    <source>
        <dbReference type="PROSITE-ProRule" id="PRU00465"/>
    </source>
</evidence>
<evidence type="ECO:0000255" key="4">
    <source>
        <dbReference type="RuleBase" id="RU000392"/>
    </source>
</evidence>
<evidence type="ECO:0000269" key="5">
    <source>
    </source>
</evidence>
<evidence type="ECO:0000305" key="6"/>
<evidence type="ECO:0000312" key="7">
    <source>
        <dbReference type="EMBL" id="AAD02175.1"/>
    </source>
</evidence>
<feature type="transit peptide" description="Chloroplast" evidence="1">
    <location>
        <begin position="1"/>
        <end position="47"/>
    </location>
</feature>
<feature type="chain" id="PRO_0000008827" description="Ferredoxin, chloroplastic">
    <location>
        <begin position="48"/>
        <end position="144"/>
    </location>
</feature>
<feature type="domain" description="2Fe-2S ferredoxin-type" evidence="3">
    <location>
        <begin position="50"/>
        <end position="140"/>
    </location>
</feature>
<feature type="binding site" evidence="3">
    <location>
        <position position="86"/>
    </location>
    <ligand>
        <name>[2Fe-2S] cluster</name>
        <dbReference type="ChEBI" id="CHEBI:190135"/>
    </ligand>
</feature>
<feature type="binding site" evidence="3">
    <location>
        <position position="91"/>
    </location>
    <ligand>
        <name>[2Fe-2S] cluster</name>
        <dbReference type="ChEBI" id="CHEBI:190135"/>
    </ligand>
</feature>
<feature type="binding site" evidence="3">
    <location>
        <position position="94"/>
    </location>
    <ligand>
        <name>[2Fe-2S] cluster</name>
        <dbReference type="ChEBI" id="CHEBI:190135"/>
    </ligand>
</feature>
<feature type="binding site" evidence="3">
    <location>
        <position position="124"/>
    </location>
    <ligand>
        <name>[2Fe-2S] cluster</name>
        <dbReference type="ChEBI" id="CHEBI:190135"/>
    </ligand>
</feature>
<feature type="modified residue" description="Phosphothreonine" evidence="5">
    <location>
        <position position="136"/>
    </location>
</feature>
<dbReference type="EMBL" id="AF039662">
    <property type="protein sequence ID" value="AAD02175.1"/>
    <property type="molecule type" value="mRNA"/>
</dbReference>
<dbReference type="SMR" id="Q9ZTS2"/>
<dbReference type="iPTMnet" id="Q9ZTS2"/>
<dbReference type="GO" id="GO:0009507">
    <property type="term" value="C:chloroplast"/>
    <property type="evidence" value="ECO:0007669"/>
    <property type="project" value="UniProtKB-SubCell"/>
</dbReference>
<dbReference type="GO" id="GO:0051537">
    <property type="term" value="F:2 iron, 2 sulfur cluster binding"/>
    <property type="evidence" value="ECO:0007669"/>
    <property type="project" value="UniProtKB-KW"/>
</dbReference>
<dbReference type="GO" id="GO:0009055">
    <property type="term" value="F:electron transfer activity"/>
    <property type="evidence" value="ECO:0007669"/>
    <property type="project" value="InterPro"/>
</dbReference>
<dbReference type="GO" id="GO:0046872">
    <property type="term" value="F:metal ion binding"/>
    <property type="evidence" value="ECO:0007669"/>
    <property type="project" value="UniProtKB-KW"/>
</dbReference>
<dbReference type="GO" id="GO:0022900">
    <property type="term" value="P:electron transport chain"/>
    <property type="evidence" value="ECO:0007669"/>
    <property type="project" value="InterPro"/>
</dbReference>
<dbReference type="GO" id="GO:0006124">
    <property type="term" value="P:ferredoxin metabolic process"/>
    <property type="evidence" value="ECO:0007669"/>
    <property type="project" value="UniProtKB-ARBA"/>
</dbReference>
<dbReference type="CDD" id="cd00207">
    <property type="entry name" value="fer2"/>
    <property type="match status" value="1"/>
</dbReference>
<dbReference type="FunFam" id="3.10.20.30:FF:000014">
    <property type="entry name" value="Ferredoxin"/>
    <property type="match status" value="1"/>
</dbReference>
<dbReference type="Gene3D" id="3.10.20.30">
    <property type="match status" value="1"/>
</dbReference>
<dbReference type="InterPro" id="IPR036010">
    <property type="entry name" value="2Fe-2S_ferredoxin-like_sf"/>
</dbReference>
<dbReference type="InterPro" id="IPR001041">
    <property type="entry name" value="2Fe-2S_ferredoxin-type"/>
</dbReference>
<dbReference type="InterPro" id="IPR006058">
    <property type="entry name" value="2Fe2S_fd_BS"/>
</dbReference>
<dbReference type="InterPro" id="IPR012675">
    <property type="entry name" value="Beta-grasp_dom_sf"/>
</dbReference>
<dbReference type="InterPro" id="IPR010241">
    <property type="entry name" value="Fd_pln"/>
</dbReference>
<dbReference type="NCBIfam" id="TIGR02008">
    <property type="entry name" value="fdx_plant"/>
    <property type="match status" value="1"/>
</dbReference>
<dbReference type="PANTHER" id="PTHR43112">
    <property type="entry name" value="FERREDOXIN"/>
    <property type="match status" value="1"/>
</dbReference>
<dbReference type="PANTHER" id="PTHR43112:SF3">
    <property type="entry name" value="FERREDOXIN-2, CHLOROPLASTIC"/>
    <property type="match status" value="1"/>
</dbReference>
<dbReference type="Pfam" id="PF00111">
    <property type="entry name" value="Fer2"/>
    <property type="match status" value="1"/>
</dbReference>
<dbReference type="SUPFAM" id="SSF54292">
    <property type="entry name" value="2Fe-2S ferredoxin-like"/>
    <property type="match status" value="1"/>
</dbReference>
<dbReference type="PROSITE" id="PS00197">
    <property type="entry name" value="2FE2S_FER_1"/>
    <property type="match status" value="1"/>
</dbReference>
<dbReference type="PROSITE" id="PS51085">
    <property type="entry name" value="2FE2S_FER_2"/>
    <property type="match status" value="1"/>
</dbReference>
<keyword id="KW-0001">2Fe-2S</keyword>
<keyword id="KW-0150">Chloroplast</keyword>
<keyword id="KW-0249">Electron transport</keyword>
<keyword id="KW-0408">Iron</keyword>
<keyword id="KW-0411">Iron-sulfur</keyword>
<keyword id="KW-0479">Metal-binding</keyword>
<keyword id="KW-0597">Phosphoprotein</keyword>
<keyword id="KW-0934">Plastid</keyword>
<keyword id="KW-0809">Transit peptide</keyword>
<keyword id="KW-0813">Transport</keyword>
<name>FER_CAPAN</name>
<accession>Q9ZTS2</accession>
<comment type="function">
    <text evidence="2">Ferredoxins are iron-sulfur proteins that transfer electrons in a wide variety of metabolic reactions.</text>
</comment>
<comment type="function">
    <text evidence="5 6">Delays the harpin-mediated hypersensitive response.</text>
</comment>
<comment type="cofactor">
    <cofactor evidence="4 6">
        <name>[2Fe-2S] cluster</name>
        <dbReference type="ChEBI" id="CHEBI:190135"/>
    </cofactor>
    <text evidence="4 6">Binds 1 [2Fe-2S] cluster.</text>
</comment>
<comment type="subcellular location">
    <subcellularLocation>
        <location evidence="5">Plastid</location>
        <location evidence="5">Chloroplast</location>
    </subcellularLocation>
</comment>
<comment type="similarity">
    <text evidence="6">Belongs to the 2Fe2S plant-type ferredoxin family.</text>
</comment>
<proteinExistence type="evidence at protein level"/>
<sequence>MASVSATMISTSFMPRKPAVTSLKPIPNVGEALFGLKSANGGKVTCMASYKVKLITPDGPIEFDCPDNVYILDQAEEAGHDLPYSCRAGSCSSCAGKIAGGAVDQTDGNFLDDDQLEEGWVLTCVAYPQSDVTIETHKEAELVG</sequence>
<organism evidence="7">
    <name type="scientific">Capsicum annuum</name>
    <name type="common">Capsicum pepper</name>
    <dbReference type="NCBI Taxonomy" id="4072"/>
    <lineage>
        <taxon>Eukaryota</taxon>
        <taxon>Viridiplantae</taxon>
        <taxon>Streptophyta</taxon>
        <taxon>Embryophyta</taxon>
        <taxon>Tracheophyta</taxon>
        <taxon>Spermatophyta</taxon>
        <taxon>Magnoliopsida</taxon>
        <taxon>eudicotyledons</taxon>
        <taxon>Gunneridae</taxon>
        <taxon>Pentapetalae</taxon>
        <taxon>asterids</taxon>
        <taxon>lamiids</taxon>
        <taxon>Solanales</taxon>
        <taxon>Solanaceae</taxon>
        <taxon>Solanoideae</taxon>
        <taxon>Capsiceae</taxon>
        <taxon>Capsicum</taxon>
    </lineage>
</organism>
<reference key="1">
    <citation type="journal article" date="2003" name="Plant Mol. Biol.">
        <title>Ferredoxin from sweet pepper (Capsicum annuum L.) intensifying harpin(pss)-mediated hypersensitive response shows an enhanced production of active oxygen species (AOS).</title>
        <authorList>
            <person name="Dayakar B.V."/>
            <person name="Lin H.-J."/>
            <person name="Chen C.-H."/>
            <person name="Ger M.-J."/>
            <person name="Lee B.-H."/>
            <person name="Pai C.-H."/>
            <person name="Chow D."/>
            <person name="Huang H.-E."/>
            <person name="Hwang S.-Y."/>
            <person name="Chung M.-C."/>
            <person name="Feng T.-Y."/>
        </authorList>
    </citation>
    <scope>NUCLEOTIDE SEQUENCE [MRNA]</scope>
    <scope>FUNCTION</scope>
    <scope>SUBCELLULAR LOCATION</scope>
    <scope>PHOSPHORYLATION AT THR-136</scope>
    <source>
        <strain>cv. ECW</strain>
        <tissue>Leaf</tissue>
    </source>
</reference>
<gene>
    <name type="primary">AP1</name>
</gene>
<protein>
    <recommendedName>
        <fullName>Ferredoxin, chloroplastic</fullName>
    </recommendedName>
    <alternativeName>
        <fullName>PFLP</fullName>
    </alternativeName>
</protein>